<dbReference type="EC" id="3.6.1.9" evidence="1"/>
<dbReference type="EC" id="3.6.1.12" evidence="1"/>
<dbReference type="EC" id="3.6.1.-" evidence="1"/>
<dbReference type="EC" id="3.6.1.23" evidence="1"/>
<dbReference type="EMBL" id="CP000880">
    <property type="protein sequence ID" value="ABX20528.1"/>
    <property type="status" value="ALT_INIT"/>
    <property type="molecule type" value="Genomic_DNA"/>
</dbReference>
<dbReference type="SMR" id="A9MJC8"/>
<dbReference type="STRING" id="41514.SARI_00602"/>
<dbReference type="KEGG" id="ses:SARI_00602"/>
<dbReference type="HOGENOM" id="CLU_037162_31_0_6"/>
<dbReference type="Proteomes" id="UP000002084">
    <property type="component" value="Chromosome"/>
</dbReference>
<dbReference type="GO" id="GO:0047840">
    <property type="term" value="F:dCTP diphosphatase activity"/>
    <property type="evidence" value="ECO:0007669"/>
    <property type="project" value="UniProtKB-EC"/>
</dbReference>
<dbReference type="GO" id="GO:0036218">
    <property type="term" value="F:dTTP diphosphatase activity"/>
    <property type="evidence" value="ECO:0007669"/>
    <property type="project" value="RHEA"/>
</dbReference>
<dbReference type="GO" id="GO:0004170">
    <property type="term" value="F:dUTP diphosphatase activity"/>
    <property type="evidence" value="ECO:0007669"/>
    <property type="project" value="UniProtKB-EC"/>
</dbReference>
<dbReference type="GO" id="GO:0000287">
    <property type="term" value="F:magnesium ion binding"/>
    <property type="evidence" value="ECO:0007669"/>
    <property type="project" value="UniProtKB-UniRule"/>
</dbReference>
<dbReference type="Gene3D" id="3.90.79.10">
    <property type="entry name" value="Nucleoside Triphosphate Pyrophosphohydrolase"/>
    <property type="match status" value="1"/>
</dbReference>
<dbReference type="HAMAP" id="MF_01846">
    <property type="entry name" value="Nudix_NudI"/>
    <property type="match status" value="1"/>
</dbReference>
<dbReference type="InterPro" id="IPR023781">
    <property type="entry name" value="Nucleoside_triphosphatase_NudI"/>
</dbReference>
<dbReference type="InterPro" id="IPR020476">
    <property type="entry name" value="Nudix_hydrolase"/>
</dbReference>
<dbReference type="InterPro" id="IPR015797">
    <property type="entry name" value="NUDIX_hydrolase-like_dom_sf"/>
</dbReference>
<dbReference type="InterPro" id="IPR020084">
    <property type="entry name" value="NUDIX_hydrolase_CS"/>
</dbReference>
<dbReference type="InterPro" id="IPR000086">
    <property type="entry name" value="NUDIX_hydrolase_dom"/>
</dbReference>
<dbReference type="NCBIfam" id="NF012016">
    <property type="entry name" value="PRK15472.1"/>
    <property type="match status" value="1"/>
</dbReference>
<dbReference type="PANTHER" id="PTHR43046">
    <property type="entry name" value="GDP-MANNOSE MANNOSYL HYDROLASE"/>
    <property type="match status" value="1"/>
</dbReference>
<dbReference type="PANTHER" id="PTHR43046:SF14">
    <property type="entry name" value="MUTT_NUDIX FAMILY PROTEIN"/>
    <property type="match status" value="1"/>
</dbReference>
<dbReference type="Pfam" id="PF00293">
    <property type="entry name" value="NUDIX"/>
    <property type="match status" value="1"/>
</dbReference>
<dbReference type="PRINTS" id="PR00502">
    <property type="entry name" value="NUDIXFAMILY"/>
</dbReference>
<dbReference type="SUPFAM" id="SSF55811">
    <property type="entry name" value="Nudix"/>
    <property type="match status" value="1"/>
</dbReference>
<dbReference type="PROSITE" id="PS51462">
    <property type="entry name" value="NUDIX"/>
    <property type="match status" value="1"/>
</dbReference>
<dbReference type="PROSITE" id="PS00893">
    <property type="entry name" value="NUDIX_BOX"/>
    <property type="match status" value="1"/>
</dbReference>
<comment type="function">
    <text evidence="1">Catalyzes the hydrolysis of nucleoside triphosphates, with a preference for pyrimidine deoxynucleoside triphosphates (dUTP, dTTP and dCTP).</text>
</comment>
<comment type="catalytic activity">
    <reaction evidence="1">
        <text>a ribonucleoside 5'-triphosphate + H2O = a ribonucleoside 5'-phosphate + diphosphate + H(+)</text>
        <dbReference type="Rhea" id="RHEA:23996"/>
        <dbReference type="ChEBI" id="CHEBI:15377"/>
        <dbReference type="ChEBI" id="CHEBI:15378"/>
        <dbReference type="ChEBI" id="CHEBI:33019"/>
        <dbReference type="ChEBI" id="CHEBI:58043"/>
        <dbReference type="ChEBI" id="CHEBI:61557"/>
        <dbReference type="EC" id="3.6.1.9"/>
    </reaction>
</comment>
<comment type="catalytic activity">
    <reaction evidence="1">
        <text>a 2'-deoxyribonucleoside 5'-triphosphate + H2O = a 2'-deoxyribonucleoside 5'-phosphate + diphosphate + H(+)</text>
        <dbReference type="Rhea" id="RHEA:44644"/>
        <dbReference type="ChEBI" id="CHEBI:15377"/>
        <dbReference type="ChEBI" id="CHEBI:15378"/>
        <dbReference type="ChEBI" id="CHEBI:33019"/>
        <dbReference type="ChEBI" id="CHEBI:61560"/>
        <dbReference type="ChEBI" id="CHEBI:65317"/>
        <dbReference type="EC" id="3.6.1.9"/>
    </reaction>
</comment>
<comment type="catalytic activity">
    <reaction evidence="1">
        <text>dUTP + H2O = dUMP + diphosphate + H(+)</text>
        <dbReference type="Rhea" id="RHEA:10248"/>
        <dbReference type="ChEBI" id="CHEBI:15377"/>
        <dbReference type="ChEBI" id="CHEBI:15378"/>
        <dbReference type="ChEBI" id="CHEBI:33019"/>
        <dbReference type="ChEBI" id="CHEBI:61555"/>
        <dbReference type="ChEBI" id="CHEBI:246422"/>
        <dbReference type="EC" id="3.6.1.9"/>
    </reaction>
</comment>
<comment type="catalytic activity">
    <reaction evidence="1">
        <text>dUTP + H2O = dUMP + diphosphate + H(+)</text>
        <dbReference type="Rhea" id="RHEA:10248"/>
        <dbReference type="ChEBI" id="CHEBI:15377"/>
        <dbReference type="ChEBI" id="CHEBI:15378"/>
        <dbReference type="ChEBI" id="CHEBI:33019"/>
        <dbReference type="ChEBI" id="CHEBI:61555"/>
        <dbReference type="ChEBI" id="CHEBI:246422"/>
        <dbReference type="EC" id="3.6.1.23"/>
    </reaction>
</comment>
<comment type="catalytic activity">
    <reaction evidence="1">
        <text>dTTP + H2O = dTMP + diphosphate + H(+)</text>
        <dbReference type="Rhea" id="RHEA:28534"/>
        <dbReference type="ChEBI" id="CHEBI:15377"/>
        <dbReference type="ChEBI" id="CHEBI:15378"/>
        <dbReference type="ChEBI" id="CHEBI:33019"/>
        <dbReference type="ChEBI" id="CHEBI:37568"/>
        <dbReference type="ChEBI" id="CHEBI:63528"/>
        <dbReference type="EC" id="3.6.1.9"/>
    </reaction>
</comment>
<comment type="catalytic activity">
    <reaction evidence="1">
        <text>dCTP + H2O = dCMP + diphosphate + H(+)</text>
        <dbReference type="Rhea" id="RHEA:22636"/>
        <dbReference type="ChEBI" id="CHEBI:15377"/>
        <dbReference type="ChEBI" id="CHEBI:15378"/>
        <dbReference type="ChEBI" id="CHEBI:33019"/>
        <dbReference type="ChEBI" id="CHEBI:57566"/>
        <dbReference type="ChEBI" id="CHEBI:61481"/>
        <dbReference type="EC" id="3.6.1.9"/>
    </reaction>
</comment>
<comment type="catalytic activity">
    <reaction evidence="1">
        <text>dCTP + H2O = dCMP + diphosphate + H(+)</text>
        <dbReference type="Rhea" id="RHEA:22636"/>
        <dbReference type="ChEBI" id="CHEBI:15377"/>
        <dbReference type="ChEBI" id="CHEBI:15378"/>
        <dbReference type="ChEBI" id="CHEBI:33019"/>
        <dbReference type="ChEBI" id="CHEBI:57566"/>
        <dbReference type="ChEBI" id="CHEBI:61481"/>
        <dbReference type="EC" id="3.6.1.12"/>
    </reaction>
</comment>
<comment type="cofactor">
    <cofactor evidence="1">
        <name>Mg(2+)</name>
        <dbReference type="ChEBI" id="CHEBI:18420"/>
    </cofactor>
</comment>
<comment type="subunit">
    <text evidence="1">Monomer.</text>
</comment>
<comment type="similarity">
    <text evidence="1">Belongs to the Nudix hydrolase family. NudI subfamily.</text>
</comment>
<comment type="sequence caution" evidence="2">
    <conflict type="erroneous initiation">
        <sequence resource="EMBL-CDS" id="ABX20528"/>
    </conflict>
</comment>
<proteinExistence type="inferred from homology"/>
<sequence length="141" mass="16435">MRQRTIVCPLIQNDGCYLLCKMADNRGVFPGQWALSGGGVEPGERIEEALRREIREELGEQLILSDITPWTFRDDIRVKTYADGRQEEIYMIYLIFDCVSANRDICINDEFQDYAWVRPEEFALYDLNVATRHTLRLKGLL</sequence>
<feature type="chain" id="PRO_0000342135" description="Nucleoside triphosphatase NudI">
    <location>
        <begin position="1"/>
        <end position="141"/>
    </location>
</feature>
<feature type="domain" description="Nudix hydrolase" evidence="1">
    <location>
        <begin position="1"/>
        <end position="141"/>
    </location>
</feature>
<feature type="short sequence motif" description="Nudix box">
    <location>
        <begin position="38"/>
        <end position="59"/>
    </location>
</feature>
<accession>A9MJC8</accession>
<reference key="1">
    <citation type="submission" date="2007-11" db="EMBL/GenBank/DDBJ databases">
        <authorList>
            <consortium name="The Salmonella enterica serovar Arizonae Genome Sequencing Project"/>
            <person name="McClelland M."/>
            <person name="Sanderson E.K."/>
            <person name="Porwollik S."/>
            <person name="Spieth J."/>
            <person name="Clifton W.S."/>
            <person name="Fulton R."/>
            <person name="Chunyan W."/>
            <person name="Wollam A."/>
            <person name="Shah N."/>
            <person name="Pepin K."/>
            <person name="Bhonagiri V."/>
            <person name="Nash W."/>
            <person name="Johnson M."/>
            <person name="Thiruvilangam P."/>
            <person name="Wilson R."/>
        </authorList>
    </citation>
    <scope>NUCLEOTIDE SEQUENCE [LARGE SCALE GENOMIC DNA]</scope>
    <source>
        <strain>ATCC BAA-731 / CDC346-86 / RSK2980</strain>
    </source>
</reference>
<keyword id="KW-0378">Hydrolase</keyword>
<keyword id="KW-0460">Magnesium</keyword>
<keyword id="KW-1185">Reference proteome</keyword>
<evidence type="ECO:0000255" key="1">
    <source>
        <dbReference type="HAMAP-Rule" id="MF_01846"/>
    </source>
</evidence>
<evidence type="ECO:0000305" key="2"/>
<organism>
    <name type="scientific">Salmonella arizonae (strain ATCC BAA-731 / CDC346-86 / RSK2980)</name>
    <dbReference type="NCBI Taxonomy" id="41514"/>
    <lineage>
        <taxon>Bacteria</taxon>
        <taxon>Pseudomonadati</taxon>
        <taxon>Pseudomonadota</taxon>
        <taxon>Gammaproteobacteria</taxon>
        <taxon>Enterobacterales</taxon>
        <taxon>Enterobacteriaceae</taxon>
        <taxon>Salmonella</taxon>
    </lineage>
</organism>
<name>NUDI_SALAR</name>
<gene>
    <name evidence="1" type="primary">nudI</name>
    <name type="ordered locus">SARI_00602</name>
</gene>
<protein>
    <recommendedName>
        <fullName evidence="1">Nucleoside triphosphatase NudI</fullName>
        <ecNumber evidence="1">3.6.1.9</ecNumber>
    </recommendedName>
    <alternativeName>
        <fullName evidence="1">Nucleotide diphosphatase NudI</fullName>
    </alternativeName>
    <alternativeName>
        <fullName evidence="1">Pyrimidine deoxynucleoside triphosphate diphosphatase</fullName>
    </alternativeName>
    <alternativeName>
        <fullName evidence="1">dCTP diphosphatase</fullName>
        <ecNumber evidence="1">3.6.1.12</ecNumber>
    </alternativeName>
    <alternativeName>
        <fullName evidence="1">dTTP diphosphatase</fullName>
        <ecNumber evidence="1">3.6.1.-</ecNumber>
    </alternativeName>
    <alternativeName>
        <fullName evidence="1">dUTP diphosphatase</fullName>
        <ecNumber evidence="1">3.6.1.23</ecNumber>
    </alternativeName>
</protein>